<protein>
    <recommendedName>
        <fullName evidence="7">1,3-beta-glucan synthase component FKS3</fullName>
        <ecNumber evidence="1">2.4.1.34</ecNumber>
    </recommendedName>
    <alternativeName>
        <fullName>1,3-beta-D-glucan-UDP glucosyltransferase</fullName>
    </alternativeName>
    <alternativeName>
        <fullName>FK506 sensitivity protein 3</fullName>
    </alternativeName>
</protein>
<name>FKS3_YEAST</name>
<comment type="function">
    <text evidence="5">Required for spore wall assembly.</text>
</comment>
<comment type="catalytic activity">
    <reaction evidence="1">
        <text>[(1-&gt;3)-beta-D-glucosyl](n) + UDP-alpha-D-glucose = [(1-&gt;3)-beta-D-glucosyl](n+1) + UDP + H(+)</text>
        <dbReference type="Rhea" id="RHEA:21476"/>
        <dbReference type="Rhea" id="RHEA-COMP:11146"/>
        <dbReference type="Rhea" id="RHEA-COMP:14303"/>
        <dbReference type="ChEBI" id="CHEBI:15378"/>
        <dbReference type="ChEBI" id="CHEBI:37671"/>
        <dbReference type="ChEBI" id="CHEBI:58223"/>
        <dbReference type="ChEBI" id="CHEBI:58885"/>
        <dbReference type="EC" id="2.4.1.34"/>
    </reaction>
</comment>
<comment type="subcellular location">
    <subcellularLocation>
        <location evidence="4">Mitochondrion</location>
    </subcellularLocation>
    <subcellularLocation>
        <location evidence="8">Membrane</location>
        <topology evidence="8">Multi-pass membrane protein</topology>
    </subcellularLocation>
</comment>
<comment type="PTM">
    <text evidence="6">N-glycosylated.</text>
</comment>
<comment type="similarity">
    <text evidence="8">Belongs to the glycosyltransferase 48 family.</text>
</comment>
<reference key="1">
    <citation type="journal article" date="1997" name="Nature">
        <title>The nucleotide sequence of Saccharomyces cerevisiae chromosome XIII.</title>
        <authorList>
            <person name="Bowman S."/>
            <person name="Churcher C.M."/>
            <person name="Badcock K."/>
            <person name="Brown D."/>
            <person name="Chillingworth T."/>
            <person name="Connor R."/>
            <person name="Dedman K."/>
            <person name="Devlin K."/>
            <person name="Gentles S."/>
            <person name="Hamlin N."/>
            <person name="Hunt S."/>
            <person name="Jagels K."/>
            <person name="Lye G."/>
            <person name="Moule S."/>
            <person name="Odell C."/>
            <person name="Pearson D."/>
            <person name="Rajandream M.A."/>
            <person name="Rice P."/>
            <person name="Skelton J."/>
            <person name="Walsh S.V."/>
            <person name="Whitehead S."/>
            <person name="Barrell B.G."/>
        </authorList>
    </citation>
    <scope>NUCLEOTIDE SEQUENCE [LARGE SCALE GENOMIC DNA]</scope>
    <source>
        <strain>ATCC 204508 / S288c</strain>
    </source>
</reference>
<reference key="2">
    <citation type="journal article" date="2014" name="G3 (Bethesda)">
        <title>The reference genome sequence of Saccharomyces cerevisiae: Then and now.</title>
        <authorList>
            <person name="Engel S.R."/>
            <person name="Dietrich F.S."/>
            <person name="Fisk D.G."/>
            <person name="Binkley G."/>
            <person name="Balakrishnan R."/>
            <person name="Costanzo M.C."/>
            <person name="Dwight S.S."/>
            <person name="Hitz B.C."/>
            <person name="Karra K."/>
            <person name="Nash R.S."/>
            <person name="Weng S."/>
            <person name="Wong E.D."/>
            <person name="Lloyd P."/>
            <person name="Skrzypek M.S."/>
            <person name="Miyasato S.R."/>
            <person name="Simison M."/>
            <person name="Cherry J.M."/>
        </authorList>
    </citation>
    <scope>GENOME REANNOTATION</scope>
    <source>
        <strain>ATCC 204508 / S288c</strain>
    </source>
</reference>
<reference key="3">
    <citation type="journal article" date="2003" name="Proc. Natl. Acad. Sci. U.S.A.">
        <title>The proteome of Saccharomyces cerevisiae mitochondria.</title>
        <authorList>
            <person name="Sickmann A."/>
            <person name="Reinders J."/>
            <person name="Wagner Y."/>
            <person name="Joppich C."/>
            <person name="Zahedi R.P."/>
            <person name="Meyer H.E."/>
            <person name="Schoenfisch B."/>
            <person name="Perschil I."/>
            <person name="Chacinska A."/>
            <person name="Guiard B."/>
            <person name="Rehling P."/>
            <person name="Pfanner N."/>
            <person name="Meisinger C."/>
        </authorList>
    </citation>
    <scope>SUBCELLULAR LOCATION [LARGE SCALE ANALYSIS]</scope>
    <source>
        <strain>ATCC 76625 / YPH499</strain>
    </source>
</reference>
<reference key="4">
    <citation type="journal article" date="2007" name="Eukaryot. Cell">
        <title>Homologous subunits of 1,3-beta-glucan synthase are important for spore wall assembly in Saccharomyces cerevisiae.</title>
        <authorList>
            <person name="Ishihara S."/>
            <person name="Hirata A."/>
            <person name="Nogami S."/>
            <person name="Beauvais A."/>
            <person name="Latge J.-P."/>
            <person name="Ohya Y."/>
        </authorList>
    </citation>
    <scope>FUNCTION</scope>
</reference>
<reference key="5">
    <citation type="journal article" date="2009" name="Mol. Syst. Biol.">
        <title>Global analysis of the glycoproteome in Saccharomyces cerevisiae reveals new roles for protein glycosylation in eukaryotes.</title>
        <authorList>
            <person name="Kung L.A."/>
            <person name="Tao S.-C."/>
            <person name="Qian J."/>
            <person name="Smith M.G."/>
            <person name="Snyder M."/>
            <person name="Zhu H."/>
        </authorList>
    </citation>
    <scope>GLYCOSYLATION [LARGE SCALE ANALYSIS]</scope>
</reference>
<keyword id="KW-0961">Cell wall biogenesis/degradation</keyword>
<keyword id="KW-0325">Glycoprotein</keyword>
<keyword id="KW-0328">Glycosyltransferase</keyword>
<keyword id="KW-0472">Membrane</keyword>
<keyword id="KW-0496">Mitochondrion</keyword>
<keyword id="KW-1185">Reference proteome</keyword>
<keyword id="KW-0749">Sporulation</keyword>
<keyword id="KW-0808">Transferase</keyword>
<keyword id="KW-0812">Transmembrane</keyword>
<keyword id="KW-1133">Transmembrane helix</keyword>
<accession>Q04952</accession>
<accession>D6W0D3</accession>
<dbReference type="EC" id="2.4.1.34" evidence="1"/>
<dbReference type="EMBL" id="Z49212">
    <property type="protein sequence ID" value="CAA89139.1"/>
    <property type="molecule type" value="Genomic_DNA"/>
</dbReference>
<dbReference type="EMBL" id="BK006946">
    <property type="protein sequence ID" value="DAA10207.1"/>
    <property type="molecule type" value="Genomic_DNA"/>
</dbReference>
<dbReference type="PIR" id="S53976">
    <property type="entry name" value="S53976"/>
</dbReference>
<dbReference type="RefSeq" id="NP_014036.1">
    <property type="nucleotide sequence ID" value="NM_001182817.1"/>
</dbReference>
<dbReference type="SMR" id="Q04952"/>
<dbReference type="BioGRID" id="35486">
    <property type="interactions" value="49"/>
</dbReference>
<dbReference type="ComplexPortal" id="CPX-3028">
    <property type="entry name" value="1,3-beta-D-glucan synthase complex, FKS3-RHO1 variant"/>
</dbReference>
<dbReference type="DIP" id="DIP-7253N"/>
<dbReference type="FunCoup" id="Q04952">
    <property type="interactions" value="238"/>
</dbReference>
<dbReference type="IntAct" id="Q04952">
    <property type="interactions" value="5"/>
</dbReference>
<dbReference type="MINT" id="Q04952"/>
<dbReference type="STRING" id="4932.YMR306W"/>
<dbReference type="CAZy" id="GT48">
    <property type="family name" value="Glycosyltransferase Family 48"/>
</dbReference>
<dbReference type="GlyCosmos" id="Q04952">
    <property type="glycosylation" value="8 sites, No reported glycans"/>
</dbReference>
<dbReference type="GlyGen" id="Q04952">
    <property type="glycosylation" value="8 sites"/>
</dbReference>
<dbReference type="iPTMnet" id="Q04952"/>
<dbReference type="PaxDb" id="4932-YMR306W"/>
<dbReference type="PeptideAtlas" id="Q04952"/>
<dbReference type="EnsemblFungi" id="YMR306W_mRNA">
    <property type="protein sequence ID" value="YMR306W"/>
    <property type="gene ID" value="YMR306W"/>
</dbReference>
<dbReference type="GeneID" id="855353"/>
<dbReference type="KEGG" id="sce:YMR306W"/>
<dbReference type="AGR" id="SGD:S000004923"/>
<dbReference type="SGD" id="S000004923">
    <property type="gene designation" value="FKS3"/>
</dbReference>
<dbReference type="VEuPathDB" id="FungiDB:YMR306W"/>
<dbReference type="eggNOG" id="KOG0916">
    <property type="taxonomic scope" value="Eukaryota"/>
</dbReference>
<dbReference type="HOGENOM" id="CLU_000844_0_1_1"/>
<dbReference type="InParanoid" id="Q04952"/>
<dbReference type="OMA" id="LWFWITV"/>
<dbReference type="OrthoDB" id="1880850at2759"/>
<dbReference type="BioCyc" id="YEAST:G3O-32970-MONOMER"/>
<dbReference type="BioGRID-ORCS" id="855353">
    <property type="hits" value="0 hits in 10 CRISPR screens"/>
</dbReference>
<dbReference type="PRO" id="PR:Q04952"/>
<dbReference type="Proteomes" id="UP000002311">
    <property type="component" value="Chromosome XIII"/>
</dbReference>
<dbReference type="RNAct" id="Q04952">
    <property type="molecule type" value="protein"/>
</dbReference>
<dbReference type="GO" id="GO:0000148">
    <property type="term" value="C:1,3-beta-D-glucan synthase complex"/>
    <property type="evidence" value="ECO:0000250"/>
    <property type="project" value="ComplexPortal"/>
</dbReference>
<dbReference type="GO" id="GO:0005783">
    <property type="term" value="C:endoplasmic reticulum"/>
    <property type="evidence" value="ECO:0007005"/>
    <property type="project" value="SGD"/>
</dbReference>
<dbReference type="GO" id="GO:0005739">
    <property type="term" value="C:mitochondrion"/>
    <property type="evidence" value="ECO:0007005"/>
    <property type="project" value="SGD"/>
</dbReference>
<dbReference type="GO" id="GO:0005886">
    <property type="term" value="C:plasma membrane"/>
    <property type="evidence" value="ECO:0000318"/>
    <property type="project" value="GO_Central"/>
</dbReference>
<dbReference type="GO" id="GO:0031160">
    <property type="term" value="C:spore wall"/>
    <property type="evidence" value="ECO:0000303"/>
    <property type="project" value="ComplexPortal"/>
</dbReference>
<dbReference type="GO" id="GO:0003843">
    <property type="term" value="F:1,3-beta-D-glucan synthase activity"/>
    <property type="evidence" value="ECO:0000250"/>
    <property type="project" value="SGD"/>
</dbReference>
<dbReference type="GO" id="GO:0006075">
    <property type="term" value="P:(1-&gt;3)-beta-D-glucan biosynthetic process"/>
    <property type="evidence" value="ECO:0000250"/>
    <property type="project" value="ComplexPortal"/>
</dbReference>
<dbReference type="GO" id="GO:0030476">
    <property type="term" value="P:ascospore wall assembly"/>
    <property type="evidence" value="ECO:0000315"/>
    <property type="project" value="SGD"/>
</dbReference>
<dbReference type="GO" id="GO:0051278">
    <property type="term" value="P:fungal-type cell wall polysaccharide biosynthetic process"/>
    <property type="evidence" value="ECO:0000318"/>
    <property type="project" value="GO_Central"/>
</dbReference>
<dbReference type="InterPro" id="IPR026899">
    <property type="entry name" value="FKS1-like_dom1"/>
</dbReference>
<dbReference type="InterPro" id="IPR056261">
    <property type="entry name" value="FKS1-like_dom2"/>
</dbReference>
<dbReference type="InterPro" id="IPR003440">
    <property type="entry name" value="Glyco_trans_48_dom"/>
</dbReference>
<dbReference type="PANTHER" id="PTHR12741:SF15">
    <property type="entry name" value="1,3-BETA-GLUCAN SYNTHASE COMPONENT FKS3"/>
    <property type="match status" value="1"/>
</dbReference>
<dbReference type="PANTHER" id="PTHR12741">
    <property type="entry name" value="LYST-INTERACTING PROTEIN LIP5 DOPAMINE RESPONSIVE PROTEIN DRG-1"/>
    <property type="match status" value="1"/>
</dbReference>
<dbReference type="Pfam" id="PF14288">
    <property type="entry name" value="FKS1_dom1"/>
    <property type="match status" value="1"/>
</dbReference>
<dbReference type="Pfam" id="PF23605">
    <property type="entry name" value="FKS1_dom2"/>
    <property type="match status" value="1"/>
</dbReference>
<dbReference type="Pfam" id="PF02364">
    <property type="entry name" value="Glucan_synthase"/>
    <property type="match status" value="1"/>
</dbReference>
<dbReference type="SMART" id="SM01205">
    <property type="entry name" value="FKS1_dom1"/>
    <property type="match status" value="1"/>
</dbReference>
<proteinExistence type="evidence at protein level"/>
<gene>
    <name type="primary">FKS3</name>
    <name type="ordered locus">YMR306W</name>
    <name type="ORF">YM9952.08</name>
</gene>
<organism>
    <name type="scientific">Saccharomyces cerevisiae (strain ATCC 204508 / S288c)</name>
    <name type="common">Baker's yeast</name>
    <dbReference type="NCBI Taxonomy" id="559292"/>
    <lineage>
        <taxon>Eukaryota</taxon>
        <taxon>Fungi</taxon>
        <taxon>Dikarya</taxon>
        <taxon>Ascomycota</taxon>
        <taxon>Saccharomycotina</taxon>
        <taxon>Saccharomycetes</taxon>
        <taxon>Saccharomycetales</taxon>
        <taxon>Saccharomycetaceae</taxon>
        <taxon>Saccharomyces</taxon>
    </lineage>
</organism>
<sequence length="1785" mass="207483">MDFMSPKFSLTDVEYPAWCQDDEVPITMQEIREIFVELMDKFGFQKSSMENMYQHLMGQLDSRASRTGAQNALVSLHVSYIGGEHANYRKWYFAAQLDLDEEIGFQNMRLHGKARQRNVKMAKKRGVSIKEQIKQWNEKEQEFINNHPKITLTQEQLEDQTNLKSADYKWKLKMKKLTPENMIRQLALYLLCWGEANQVRFAPECLCFIFKCALDYDISTSSSEKTVKSPEYSYLNDVITPLYEFLRGQVYKKDAKGNWKRREKDHKNIIGYDDINQLFWYPEGFERIILNNGERLVDKPLEERYLYFKDVAWSKVFYKTYRETRSWKHCFTNFNRFWIIHFAPFWFFTTFNSPTLYTKNYIQLLNNQPTPQVRLSVIAFGGTIACLVQILATVFEWGFVPREWPGAQHLSSRMIGLLFCLAINLGPSVYVLGFFEWDVHSKSAYIVSIVQLIIAFLTTFFFAVRPLGGLFRPYLNKDKKHRRYISSQTFTASFPKLTGRSKWFSYGLWVFVYLAKYIESYFFLTLSLRDPIRVLSIMDLSRCQGEYLLGPILCKWQAKITLVLMLLSDLGLFFLDTYLWYIICNCIFSIVLSFSLGTSILTPWKNVYSRLPKRIYSKILATSEMDVKFKAKILISQVWNAIVISMYREHLLSIEHLQRLLFQQVDSLMGDTRTLKSPTFFVAQDDSTFKSMEFFPSNSEAKRRISFFAQSLATPISEPVPVDCMPTFTVLVPHYSEKILLGLKEIIREESPKSKITVLEYLKHLHPTEWECFVKDTKLLSMEKSFLKEAESSHDEDRLEIPDALYDPRSSPLSDHTESRKLPTEDDLIKEKINDLPFSYFGFNSSEPSYTLRTRIWASLRTQTLYRTLSGFMNYSKAIKLLYRIENPSLVSLYRGNNEALENDLENMASRKFRMVVAMQRYAKFNKDEVEATELLLRAYPNMFISYLLEELEQNESEKTYYSCLTNGYAEFDEESGLRKPIFKIRLSGNPILGDGKSDNQNHSIIFYRGEYIQVIDANQDNYLEECLKIRSVLSEFEELELNPTIPYIPGIEYEEEPPPIAIVGSREYIFSENIGVLGDIAAGKEQTFGTLFARTLAEIGGKLHYGHPDFLNGIFMTTRGGLSKAQRGLHLNEDIYAGMNAICRGGKIKHSDYYQCGKGRDLGFGSILNFTTKIGAGMGEQLLSREYYYLGTQLPMDRFLSFFYAHPGFHLNNLFISFSVQLFFVLLLNLGALNHEIIACFYDKDAPITNLETPVGCYNIQPALHWVSIFVLSIFIVFFIAFAPLLIQEVLEKGIWRAASRFLHHLLSMAPLFEVFVCQVYSNSLLMDLTFGGAKYISTGRGFAITRLDFFTLYSRFVNISIYSGFQVFFMLLFAIISMWQPALLWFWITVISMCFAPFIFNPHQFAFMDFFIDYKTFIHWLFSGNTKYQKESWANFVKSSRSRFTGYKSKTVDDISEDSGHDSKKARFWNVFFAELFLPFCVFLFNFTAFSFINAQTGVSDSTPTSAVFRLLLVTFLPIFLNSIVLFLLFWVSLFVVPGLSYCCKDAGAVIAFIAHTFSVLVYLLDFELMWFLQGWNFTRTLILLITCINMHLILFKVFTTIFLTREYKNNKAHLAWWNGKWYNTGMGWSIILQPIREYFVKIMESSYFAADFFLGHFLLFIQTPIILLPFIDYWHTMVLFWMNPRSIIAHKRILTRKQRALRSRIVSKYFSLYFVMLGVLLFMLIAPFFAGDFVSSPQELLEGTLFEGIFQPNNQNNNDTGPNAPSTILTTTPTLPTFRTVA</sequence>
<evidence type="ECO:0000250" key="1">
    <source>
        <dbReference type="UniProtKB" id="P38631"/>
    </source>
</evidence>
<evidence type="ECO:0000255" key="2"/>
<evidence type="ECO:0000256" key="3">
    <source>
        <dbReference type="SAM" id="MobiDB-lite"/>
    </source>
</evidence>
<evidence type="ECO:0000269" key="4">
    <source>
    </source>
</evidence>
<evidence type="ECO:0000269" key="5">
    <source>
    </source>
</evidence>
<evidence type="ECO:0000269" key="6">
    <source>
    </source>
</evidence>
<evidence type="ECO:0000303" key="7">
    <source>
    </source>
</evidence>
<evidence type="ECO:0000305" key="8"/>
<feature type="chain" id="PRO_0000121727" description="1,3-beta-glucan synthase component FKS3">
    <location>
        <begin position="1"/>
        <end position="1785"/>
    </location>
</feature>
<feature type="transmembrane region" description="Helical" evidence="2">
    <location>
        <begin position="337"/>
        <end position="357"/>
    </location>
</feature>
<feature type="transmembrane region" description="Helical" evidence="2">
    <location>
        <begin position="375"/>
        <end position="395"/>
    </location>
</feature>
<feature type="transmembrane region" description="Helical" evidence="2">
    <location>
        <begin position="415"/>
        <end position="435"/>
    </location>
</feature>
<feature type="transmembrane region" description="Helical" evidence="2">
    <location>
        <begin position="444"/>
        <end position="464"/>
    </location>
</feature>
<feature type="transmembrane region" description="Helical" evidence="2">
    <location>
        <begin position="508"/>
        <end position="528"/>
    </location>
</feature>
<feature type="transmembrane region" description="Helical" evidence="2">
    <location>
        <begin position="547"/>
        <end position="567"/>
    </location>
</feature>
<feature type="transmembrane region" description="Helical" evidence="2">
    <location>
        <begin position="572"/>
        <end position="592"/>
    </location>
</feature>
<feature type="transmembrane region" description="Helical" evidence="2">
    <location>
        <begin position="712"/>
        <end position="732"/>
    </location>
</feature>
<feature type="transmembrane region" description="Helical" evidence="2">
    <location>
        <begin position="1215"/>
        <end position="1235"/>
    </location>
</feature>
<feature type="transmembrane region" description="Helical" evidence="2">
    <location>
        <begin position="1268"/>
        <end position="1288"/>
    </location>
</feature>
<feature type="transmembrane region" description="Helical" evidence="2">
    <location>
        <begin position="1303"/>
        <end position="1323"/>
    </location>
</feature>
<feature type="transmembrane region" description="Helical" evidence="2">
    <location>
        <begin position="1370"/>
        <end position="1390"/>
    </location>
</feature>
<feature type="transmembrane region" description="Helical" evidence="2">
    <location>
        <begin position="1394"/>
        <end position="1414"/>
    </location>
</feature>
<feature type="transmembrane region" description="Helical" evidence="2">
    <location>
        <begin position="1475"/>
        <end position="1495"/>
    </location>
</feature>
<feature type="transmembrane region" description="Helical" evidence="2">
    <location>
        <begin position="1514"/>
        <end position="1534"/>
    </location>
</feature>
<feature type="transmembrane region" description="Helical" evidence="2">
    <location>
        <begin position="1549"/>
        <end position="1569"/>
    </location>
</feature>
<feature type="transmembrane region" description="Helical" evidence="2">
    <location>
        <begin position="1585"/>
        <end position="1605"/>
    </location>
</feature>
<feature type="transmembrane region" description="Helical" evidence="2">
    <location>
        <begin position="1655"/>
        <end position="1675"/>
    </location>
</feature>
<feature type="transmembrane region" description="Helical" evidence="2">
    <location>
        <begin position="1713"/>
        <end position="1733"/>
    </location>
</feature>
<feature type="region of interest" description="Disordered" evidence="3">
    <location>
        <begin position="791"/>
        <end position="824"/>
    </location>
</feature>
<feature type="compositionally biased region" description="Basic and acidic residues" evidence="3">
    <location>
        <begin position="791"/>
        <end position="801"/>
    </location>
</feature>
<feature type="compositionally biased region" description="Basic and acidic residues" evidence="3">
    <location>
        <begin position="815"/>
        <end position="824"/>
    </location>
</feature>
<feature type="glycosylation site" description="N-linked (GlcNAc...) asparagine" evidence="2">
    <location>
        <position position="844"/>
    </location>
</feature>
<feature type="glycosylation site" description="N-linked (GlcNAc...) asparagine" evidence="2">
    <location>
        <position position="874"/>
    </location>
</feature>
<feature type="glycosylation site" description="N-linked (GlcNAc...) asparagine" evidence="2">
    <location>
        <position position="955"/>
    </location>
</feature>
<feature type="glycosylation site" description="N-linked (GlcNAc...) asparagine" evidence="2">
    <location>
        <position position="1002"/>
    </location>
</feature>
<feature type="glycosylation site" description="N-linked (GlcNAc...) asparagine" evidence="2">
    <location>
        <position position="1170"/>
    </location>
</feature>
<feature type="glycosylation site" description="N-linked (GlcNAc...) asparagine" evidence="2">
    <location>
        <position position="1360"/>
    </location>
</feature>
<feature type="glycosylation site" description="N-linked (GlcNAc...) asparagine" evidence="2">
    <location>
        <position position="1579"/>
    </location>
</feature>
<feature type="glycosylation site" description="N-linked (GlcNAc...) asparagine" evidence="2">
    <location>
        <position position="1761"/>
    </location>
</feature>